<sequence length="99" mass="11018">MATSNDQTNTKSSHSRTLLLLFIFLSLLLFSSLTIPMTRHQSTSMVAPFKRVLLESSVPASSTMDLRPKASTRRSRTSRRREFGNDAHEVPSGPNPISN</sequence>
<gene>
    <name evidence="11" type="primary">CLE41</name>
    <name evidence="14" type="ordered locus">At3g24770</name>
    <name evidence="15" type="ORF">K7P8.35</name>
</gene>
<organism>
    <name type="scientific">Arabidopsis thaliana</name>
    <name type="common">Mouse-ear cress</name>
    <dbReference type="NCBI Taxonomy" id="3702"/>
    <lineage>
        <taxon>Eukaryota</taxon>
        <taxon>Viridiplantae</taxon>
        <taxon>Streptophyta</taxon>
        <taxon>Embryophyta</taxon>
        <taxon>Tracheophyta</taxon>
        <taxon>Spermatophyta</taxon>
        <taxon>Magnoliopsida</taxon>
        <taxon>eudicotyledons</taxon>
        <taxon>Gunneridae</taxon>
        <taxon>Pentapetalae</taxon>
        <taxon>rosids</taxon>
        <taxon>malvids</taxon>
        <taxon>Brassicales</taxon>
        <taxon>Brassicaceae</taxon>
        <taxon>Camelineae</taxon>
        <taxon>Arabidopsis</taxon>
    </lineage>
</organism>
<dbReference type="EMBL" id="AB028609">
    <property type="status" value="NOT_ANNOTATED_CDS"/>
    <property type="molecule type" value="Genomic_DNA"/>
</dbReference>
<dbReference type="EMBL" id="CP002686">
    <property type="protein sequence ID" value="AEE76945.1"/>
    <property type="molecule type" value="Genomic_DNA"/>
</dbReference>
<dbReference type="EMBL" id="BT004087">
    <property type="protein sequence ID" value="AAO42114.1"/>
    <property type="molecule type" value="mRNA"/>
</dbReference>
<dbReference type="EMBL" id="BT020560">
    <property type="protein sequence ID" value="AAW70406.1"/>
    <property type="molecule type" value="mRNA"/>
</dbReference>
<dbReference type="EMBL" id="AY087469">
    <property type="protein sequence ID" value="AAM67331.1"/>
    <property type="molecule type" value="mRNA"/>
</dbReference>
<dbReference type="RefSeq" id="NP_566754.1">
    <property type="nucleotide sequence ID" value="NM_113389.1"/>
</dbReference>
<dbReference type="PDB" id="5GIJ">
    <property type="method" value="X-ray"/>
    <property type="resolution" value="3.00 A"/>
    <property type="chains" value="D=88-99"/>
</dbReference>
<dbReference type="PDB" id="5GR9">
    <property type="method" value="X-ray"/>
    <property type="resolution" value="2.77 A"/>
    <property type="chains" value="C=88-99"/>
</dbReference>
<dbReference type="PDB" id="5JFI">
    <property type="method" value="X-ray"/>
    <property type="resolution" value="2.75 A"/>
    <property type="chains" value="C/D=88-99"/>
</dbReference>
<dbReference type="PDBsum" id="5GIJ"/>
<dbReference type="PDBsum" id="5GR9"/>
<dbReference type="PDBsum" id="5JFI"/>
<dbReference type="SMR" id="Q84W98"/>
<dbReference type="FunCoup" id="Q84W98">
    <property type="interactions" value="23"/>
</dbReference>
<dbReference type="STRING" id="3702.Q84W98"/>
<dbReference type="GlyCosmos" id="Q84W98">
    <property type="glycosylation" value="1 site, No reported glycans"/>
</dbReference>
<dbReference type="PaxDb" id="3702-AT3G24770.1"/>
<dbReference type="EnsemblPlants" id="AT3G24770.1">
    <property type="protein sequence ID" value="AT3G24770.1"/>
    <property type="gene ID" value="AT3G24770"/>
</dbReference>
<dbReference type="GeneID" id="822075"/>
<dbReference type="Gramene" id="AT3G24770.1">
    <property type="protein sequence ID" value="AT3G24770.1"/>
    <property type="gene ID" value="AT3G24770"/>
</dbReference>
<dbReference type="KEGG" id="ath:AT3G24770"/>
<dbReference type="Araport" id="AT3G24770"/>
<dbReference type="TAIR" id="AT3G24770">
    <property type="gene designation" value="CLE41"/>
</dbReference>
<dbReference type="HOGENOM" id="CLU_161000_0_0_1"/>
<dbReference type="InParanoid" id="Q84W98"/>
<dbReference type="OMA" id="TIPMTHH"/>
<dbReference type="PhylomeDB" id="Q84W98"/>
<dbReference type="EvolutionaryTrace" id="Q84W98"/>
<dbReference type="PRO" id="PR:Q84W98"/>
<dbReference type="Proteomes" id="UP000006548">
    <property type="component" value="Chromosome 3"/>
</dbReference>
<dbReference type="ExpressionAtlas" id="Q84W98">
    <property type="expression patterns" value="baseline and differential"/>
</dbReference>
<dbReference type="GO" id="GO:0048046">
    <property type="term" value="C:apoplast"/>
    <property type="evidence" value="ECO:0000314"/>
    <property type="project" value="UniProtKB"/>
</dbReference>
<dbReference type="GO" id="GO:0033612">
    <property type="term" value="F:receptor serine/threonine kinase binding"/>
    <property type="evidence" value="ECO:0000353"/>
    <property type="project" value="UniProtKB"/>
</dbReference>
<dbReference type="GO" id="GO:0090506">
    <property type="term" value="P:axillary shoot meristem initiation"/>
    <property type="evidence" value="ECO:0000314"/>
    <property type="project" value="TAIR"/>
</dbReference>
<dbReference type="GO" id="GO:0051301">
    <property type="term" value="P:cell division"/>
    <property type="evidence" value="ECO:0000315"/>
    <property type="project" value="TAIR"/>
</dbReference>
<dbReference type="GO" id="GO:0045168">
    <property type="term" value="P:cell-cell signaling involved in cell fate commitment"/>
    <property type="evidence" value="ECO:0000250"/>
    <property type="project" value="UniProtKB"/>
</dbReference>
<dbReference type="GO" id="GO:0010078">
    <property type="term" value="P:maintenance of root meristem identity"/>
    <property type="evidence" value="ECO:0000314"/>
    <property type="project" value="UniProtKB"/>
</dbReference>
<dbReference type="GO" id="GO:0010088">
    <property type="term" value="P:phloem development"/>
    <property type="evidence" value="ECO:0000314"/>
    <property type="project" value="UniProtKB"/>
</dbReference>
<dbReference type="GO" id="GO:0010087">
    <property type="term" value="P:phloem or xylem histogenesis"/>
    <property type="evidence" value="ECO:0000314"/>
    <property type="project" value="TAIR"/>
</dbReference>
<dbReference type="GO" id="GO:0010067">
    <property type="term" value="P:procambium histogenesis"/>
    <property type="evidence" value="ECO:0000314"/>
    <property type="project" value="UniProtKB"/>
</dbReference>
<dbReference type="GO" id="GO:0045595">
    <property type="term" value="P:regulation of cell differentiation"/>
    <property type="evidence" value="ECO:0000314"/>
    <property type="project" value="UniProtKB"/>
</dbReference>
<dbReference type="GO" id="GO:0010223">
    <property type="term" value="P:secondary shoot formation"/>
    <property type="evidence" value="ECO:0000315"/>
    <property type="project" value="TAIR"/>
</dbReference>
<dbReference type="GO" id="GO:0010089">
    <property type="term" value="P:xylem development"/>
    <property type="evidence" value="ECO:0000314"/>
    <property type="project" value="UniProtKB"/>
</dbReference>
<dbReference type="InterPro" id="IPR037495">
    <property type="entry name" value="CLE41/42/44"/>
</dbReference>
<dbReference type="PANTHER" id="PTHR35301">
    <property type="entry name" value="CLAVATA3/ESR (CLE)-RELATED PROTEIN 41-RELATED"/>
    <property type="match status" value="1"/>
</dbReference>
<dbReference type="PANTHER" id="PTHR35301:SF1">
    <property type="entry name" value="CLAVATA3_ESR (CLE)-RELATED PROTEIN 41-RELATED"/>
    <property type="match status" value="1"/>
</dbReference>
<proteinExistence type="evidence at protein level"/>
<protein>
    <recommendedName>
        <fullName evidence="11">CLAVATA3/ESR (CLE)-related protein 41</fullName>
    </recommendedName>
    <alternativeName>
        <fullName evidence="12">Tracheary element differentiation inhibitory factor-like protein</fullName>
        <shortName evidence="12">TDIF-like protein</shortName>
    </alternativeName>
    <component>
        <recommendedName>
            <fullName evidence="11">CLE41p</fullName>
        </recommendedName>
    </component>
</protein>
<reference key="1">
    <citation type="journal article" date="2000" name="DNA Res.">
        <title>Structural analysis of Arabidopsis thaliana chromosome 3. I. Sequence features of the regions of 4,504,864 bp covered by sixty P1 and TAC clones.</title>
        <authorList>
            <person name="Sato S."/>
            <person name="Nakamura Y."/>
            <person name="Kaneko T."/>
            <person name="Katoh T."/>
            <person name="Asamizu E."/>
            <person name="Tabata S."/>
        </authorList>
    </citation>
    <scope>NUCLEOTIDE SEQUENCE [LARGE SCALE GENOMIC DNA]</scope>
    <source>
        <strain>cv. Columbia</strain>
    </source>
</reference>
<reference key="2">
    <citation type="journal article" date="2017" name="Plant J.">
        <title>Araport11: a complete reannotation of the Arabidopsis thaliana reference genome.</title>
        <authorList>
            <person name="Cheng C.Y."/>
            <person name="Krishnakumar V."/>
            <person name="Chan A.P."/>
            <person name="Thibaud-Nissen F."/>
            <person name="Schobel S."/>
            <person name="Town C.D."/>
        </authorList>
    </citation>
    <scope>GENOME REANNOTATION</scope>
    <source>
        <strain>cv. Columbia</strain>
    </source>
</reference>
<reference key="3">
    <citation type="journal article" date="2003" name="Science">
        <title>Empirical analysis of transcriptional activity in the Arabidopsis genome.</title>
        <authorList>
            <person name="Yamada K."/>
            <person name="Lim J."/>
            <person name="Dale J.M."/>
            <person name="Chen H."/>
            <person name="Shinn P."/>
            <person name="Palm C.J."/>
            <person name="Southwick A.M."/>
            <person name="Wu H.C."/>
            <person name="Kim C.J."/>
            <person name="Nguyen M."/>
            <person name="Pham P.K."/>
            <person name="Cheuk R.F."/>
            <person name="Karlin-Newmann G."/>
            <person name="Liu S.X."/>
            <person name="Lam B."/>
            <person name="Sakano H."/>
            <person name="Wu T."/>
            <person name="Yu G."/>
            <person name="Miranda M."/>
            <person name="Quach H.L."/>
            <person name="Tripp M."/>
            <person name="Chang C.H."/>
            <person name="Lee J.M."/>
            <person name="Toriumi M.J."/>
            <person name="Chan M.M."/>
            <person name="Tang C.C."/>
            <person name="Onodera C.S."/>
            <person name="Deng J.M."/>
            <person name="Akiyama K."/>
            <person name="Ansari Y."/>
            <person name="Arakawa T."/>
            <person name="Banh J."/>
            <person name="Banno F."/>
            <person name="Bowser L."/>
            <person name="Brooks S.Y."/>
            <person name="Carninci P."/>
            <person name="Chao Q."/>
            <person name="Choy N."/>
            <person name="Enju A."/>
            <person name="Goldsmith A.D."/>
            <person name="Gurjal M."/>
            <person name="Hansen N.F."/>
            <person name="Hayashizaki Y."/>
            <person name="Johnson-Hopson C."/>
            <person name="Hsuan V.W."/>
            <person name="Iida K."/>
            <person name="Karnes M."/>
            <person name="Khan S."/>
            <person name="Koesema E."/>
            <person name="Ishida J."/>
            <person name="Jiang P.X."/>
            <person name="Jones T."/>
            <person name="Kawai J."/>
            <person name="Kamiya A."/>
            <person name="Meyers C."/>
            <person name="Nakajima M."/>
            <person name="Narusaka M."/>
            <person name="Seki M."/>
            <person name="Sakurai T."/>
            <person name="Satou M."/>
            <person name="Tamse R."/>
            <person name="Vaysberg M."/>
            <person name="Wallender E.K."/>
            <person name="Wong C."/>
            <person name="Yamamura Y."/>
            <person name="Yuan S."/>
            <person name="Shinozaki K."/>
            <person name="Davis R.W."/>
            <person name="Theologis A."/>
            <person name="Ecker J.R."/>
        </authorList>
    </citation>
    <scope>NUCLEOTIDE SEQUENCE [LARGE SCALE MRNA]</scope>
    <source>
        <strain>cv. Columbia</strain>
    </source>
</reference>
<reference key="4">
    <citation type="submission" date="2005-01" db="EMBL/GenBank/DDBJ databases">
        <title>Arabidopsis ORF clones.</title>
        <authorList>
            <person name="Cheuk R.F."/>
            <person name="Chen H."/>
            <person name="Kim C.J."/>
            <person name="Shinn P."/>
            <person name="Ecker J.R."/>
        </authorList>
    </citation>
    <scope>NUCLEOTIDE SEQUENCE [LARGE SCALE MRNA]</scope>
    <source>
        <strain>cv. Columbia</strain>
    </source>
</reference>
<reference key="5">
    <citation type="submission" date="2002-03" db="EMBL/GenBank/DDBJ databases">
        <title>Full-length cDNA from Arabidopsis thaliana.</title>
        <authorList>
            <person name="Brover V.V."/>
            <person name="Troukhan M.E."/>
            <person name="Alexandrov N.A."/>
            <person name="Lu Y.-P."/>
            <person name="Flavell R.B."/>
            <person name="Feldmann K.A."/>
        </authorList>
    </citation>
    <scope>NUCLEOTIDE SEQUENCE [LARGE SCALE MRNA]</scope>
</reference>
<reference key="6">
    <citation type="journal article" date="2006" name="Plant Physiol.">
        <title>Gain-of-function phenotypes of many CLAVATA3/ESR genes, including four new family members, correlate with tandem variations in the conserved CLAVATA3/ESR domain.</title>
        <authorList>
            <person name="Strabala T.J."/>
            <person name="O'donnell P.J."/>
            <person name="Smit A.-M."/>
            <person name="Ampomah-Dwamena C."/>
            <person name="Martin E.J."/>
            <person name="Netzler N."/>
            <person name="Nieuwenhuizen N.J."/>
            <person name="Quinn B.D."/>
            <person name="Foote H.C.C."/>
            <person name="Hudson K.R."/>
        </authorList>
    </citation>
    <scope>TISSUE SPECIFICITY</scope>
    <scope>GENE FAMILY</scope>
</reference>
<reference key="7">
    <citation type="journal article" date="2006" name="Science">
        <title>Dodeca-CLE peptides as suppressors of plant stem cell differentiation.</title>
        <authorList>
            <person name="Ito Y."/>
            <person name="Nakanomyo I."/>
            <person name="Motose H."/>
            <person name="Iwamoto K."/>
            <person name="Sawa S."/>
            <person name="Dohmae N."/>
            <person name="Fukuda H."/>
        </authorList>
    </citation>
    <scope>FUNCTION</scope>
</reference>
<reference key="8">
    <citation type="journal article" date="2008" name="Cell. Mol. Life Sci.">
        <title>The CLE family of plant polypeptide signaling molecules.</title>
        <authorList>
            <person name="Jun J.H."/>
            <person name="Fiume E."/>
            <person name="Fletcher J.C."/>
        </authorList>
    </citation>
    <scope>REVIEW</scope>
</reference>
<reference key="9">
    <citation type="journal article" date="2008" name="Curr. Opin. Plant Biol.">
        <title>Diverse and conserved roles of CLE peptides.</title>
        <authorList>
            <person name="Mitchum M.G."/>
            <person name="Wang X."/>
            <person name="Davis E.L."/>
        </authorList>
    </citation>
    <scope>REVIEW</scope>
</reference>
<reference key="10">
    <citation type="journal article" date="2008" name="Proc. Natl. Acad. Sci. U.S.A.">
        <title>Non-cell-autonomous control of vascular stem cell fate by a CLE peptide/receptor system.</title>
        <authorList>
            <person name="Hirakawa Y."/>
            <person name="Shinohara H."/>
            <person name="Kondo Y."/>
            <person name="Inoue A."/>
            <person name="Nakanomyo I."/>
            <person name="Ogawa M."/>
            <person name="Sawa S."/>
            <person name="Ohashi-Ito K."/>
            <person name="Matsubayashi Y."/>
            <person name="Fukuda H."/>
        </authorList>
    </citation>
    <scope>FUNCTION</scope>
    <scope>MUTAGENESIS OF PRO-94</scope>
    <scope>INTERACTION WITH TDR</scope>
    <scope>TISSUE SPECIFICITY</scope>
    <scope>SUBCELLULAR LOCATION</scope>
</reference>
<reference key="11">
    <citation type="journal article" date="2008" name="Proc. Natl. Acad. Sci. U.S.A.">
        <title>Plant CLE peptides from two distinct functional classes synergistically induce division of vascular cells.</title>
        <authorList>
            <person name="Whitford R."/>
            <person name="Fernandez A."/>
            <person name="De Groodt R."/>
            <person name="Ortega E."/>
            <person name="Hilson P."/>
        </authorList>
    </citation>
    <scope>FUNCTION</scope>
</reference>
<reference key="12">
    <citation type="journal article" date="2010" name="Protoplasma">
        <title>CLE peptide signaling during plant development.</title>
        <authorList>
            <person name="Wang G."/>
            <person name="Fiers M."/>
        </authorList>
    </citation>
    <scope>REVIEW</scope>
</reference>
<reference key="13">
    <citation type="journal article" date="2017" name="EMBO Rep.">
        <title>Perception of root-active CLE peptides requires CORYNE function in the phloem vasculature.</title>
        <authorList>
            <person name="Hazak O."/>
            <person name="Brandt B."/>
            <person name="Cattaneo P."/>
            <person name="Santiago J."/>
            <person name="Rodriguez-Villalon A."/>
            <person name="Hothorn M."/>
            <person name="Hardtke C.S."/>
        </authorList>
    </citation>
    <scope>FUNCTION</scope>
    <source>
        <strain>cv. Columbia</strain>
    </source>
</reference>
<reference key="14">
    <citation type="submission" date="2013-12" db="PDB data bank">
        <title>Inferring function of CLE peptides from high resolution tertiary structures.</title>
        <authorList>
            <person name="DiGennaro P.M."/>
            <person name="Bobay B.G."/>
            <person name="Bird D.M."/>
        </authorList>
    </citation>
    <scope>STRUCTURE BY NMR OF 88-99</scope>
</reference>
<reference key="15">
    <citation type="journal article" date="2016" name="Cell Res.">
        <title>Crystal structure of PXY-TDIF complex reveals a conserved recognition mechanism among CLE peptide-receptor pairs.</title>
        <authorList>
            <person name="Zhang H."/>
            <person name="Lin X."/>
            <person name="Han Z."/>
            <person name="Qu L.-J."/>
            <person name="Chai J."/>
        </authorList>
    </citation>
    <scope>X-RAY CRYSTALLOGRAPHY (2.77 ANGSTROMS) OF 88-99 IN COMPLEX WITH TDR</scope>
    <scope>MUTAGENESIS OF HIS-88; VAL-90; GLY-93; ASN-95; PRO-96; SER-98 AND ASN-99</scope>
</reference>
<reference key="16">
    <citation type="journal article" date="2016" name="Nat. Commun.">
        <title>Crystal structure of the plant receptor-like kinase TDR in complex with the TDIF peptide.</title>
        <authorList>
            <person name="Morita J."/>
            <person name="Kato K."/>
            <person name="Nakane T."/>
            <person name="Kondo Y."/>
            <person name="Fukuda H."/>
            <person name="Nishimasu H."/>
            <person name="Ishitani R."/>
            <person name="Nureki O."/>
        </authorList>
    </citation>
    <scope>X-RAY CRYSTALLOGRAPHY (3.00 ANGSTROMS) OF 88-99 IN COMPLEX WITH TDR</scope>
</reference>
<reference key="17">
    <citation type="submission" date="2016-04" db="PDB data bank">
        <title>Crystal structure of a TDIF-TDR complex.</title>
        <authorList>
            <person name="Xu G."/>
            <person name="Li Z."/>
        </authorList>
    </citation>
    <scope>X-RAY CRYSTALLOGRAPHY (2.75 ANGSTROMS) OF 88-99</scope>
</reference>
<evidence type="ECO:0000250" key="1">
    <source>
        <dbReference type="UniProtKB" id="O49519"/>
    </source>
</evidence>
<evidence type="ECO:0000255" key="2"/>
<evidence type="ECO:0000256" key="3">
    <source>
        <dbReference type="SAM" id="MobiDB-lite"/>
    </source>
</evidence>
<evidence type="ECO:0000269" key="4">
    <source>
    </source>
</evidence>
<evidence type="ECO:0000269" key="5">
    <source>
    </source>
</evidence>
<evidence type="ECO:0000269" key="6">
    <source>
    </source>
</evidence>
<evidence type="ECO:0000269" key="7">
    <source>
    </source>
</evidence>
<evidence type="ECO:0000269" key="8">
    <source>
    </source>
</evidence>
<evidence type="ECO:0000269" key="9">
    <source>
    </source>
</evidence>
<evidence type="ECO:0000269" key="10">
    <source>
    </source>
</evidence>
<evidence type="ECO:0000303" key="11">
    <source>
    </source>
</evidence>
<evidence type="ECO:0000303" key="12">
    <source>
    </source>
</evidence>
<evidence type="ECO:0000305" key="13"/>
<evidence type="ECO:0000312" key="14">
    <source>
        <dbReference type="Araport" id="AT3G24770"/>
    </source>
</evidence>
<evidence type="ECO:0000312" key="15">
    <source>
        <dbReference type="EMBL" id="AB028609"/>
    </source>
</evidence>
<comment type="function">
    <molecule>CLE41p</molecule>
    <text evidence="5 6 7 10">Extracellular signal peptide that regulates cell fate. May act with TDR as a ligand-receptor pair in a signal transduction pathway that represses tracheary element differentiation but promotes the formation of procambial cells adjacent to phloem cells in the veins in an auxin-dependent manner. Regulates the transition of protophloem cells from proliferation to differentiation, thus impinging on postembryonic growth capacity of the root meristem; this signaling pathway requires CRN and CLV2 (PubMed:28607033).</text>
</comment>
<comment type="subunit">
    <molecule>CLE41p</molecule>
    <text evidence="6 8 9">CLE41p interacts specifically with the leucine-rich repeat receptor-like protein kinase TDR.</text>
</comment>
<comment type="subcellular location">
    <molecule>CLE41p</molecule>
    <subcellularLocation>
        <location evidence="6">Secreted</location>
        <location evidence="6">Extracellular space</location>
    </subcellularLocation>
    <text evidence="6">Probably secreted from the phloem cells and distributed in the procambial region.</text>
</comment>
<comment type="tissue specificity">
    <molecule>CLE41p</molecule>
    <text evidence="4 6">Mostly expressed in inflorescence and roots, and, to a lower extent, in seedlings, flowers, leaves and siliques. Observed along the vascular strands in cotyledons, leaves and roots, but not in shoot apical meristems (SAM). Restricted to the phloem and the neighboring pericycle cells in the roots and hypocotyls.</text>
</comment>
<comment type="PTM">
    <molecule>CLE41p</molecule>
    <text evidence="1">The O-glycosylation (arabinosylation) of the hydroxyproline Pro-94 enhances binding affinity of the CLE41p peptide for its receptor.</text>
</comment>
<comment type="similarity">
    <text evidence="13">Belongs to the CLV3/ESR signal peptide family.</text>
</comment>
<feature type="signal peptide" evidence="2">
    <location>
        <begin position="1"/>
        <end position="34"/>
    </location>
</feature>
<feature type="chain" id="PRO_0000401283" description="CLAVATA3/ESR (CLE)-related protein 41">
    <location>
        <begin position="35"/>
        <end position="99"/>
    </location>
</feature>
<feature type="peptide" id="PRO_0000401284" description="CLE41p" evidence="1">
    <location>
        <begin position="88"/>
        <end position="99"/>
    </location>
</feature>
<feature type="region of interest" description="Disordered" evidence="3">
    <location>
        <begin position="60"/>
        <end position="99"/>
    </location>
</feature>
<feature type="compositionally biased region" description="Basic residues" evidence="3">
    <location>
        <begin position="70"/>
        <end position="79"/>
    </location>
</feature>
<feature type="compositionally biased region" description="Basic and acidic residues" evidence="3">
    <location>
        <begin position="80"/>
        <end position="89"/>
    </location>
</feature>
<feature type="modified residue" description="Hydroxyproline" evidence="1">
    <location>
        <position position="91"/>
    </location>
</feature>
<feature type="modified residue" description="Hydroxyproline" evidence="1">
    <location>
        <position position="94"/>
    </location>
</feature>
<feature type="glycosylation site" description="O-linked (Ara...) hydroxyproline" evidence="1">
    <location>
        <position position="94"/>
    </location>
</feature>
<feature type="mutagenesis site" description="Compromised interaction with TDR." evidence="8">
    <original>H</original>
    <variation>R</variation>
    <location>
        <position position="88"/>
    </location>
</feature>
<feature type="mutagenesis site" description="Compromised interaction with TDR." evidence="8">
    <original>V</original>
    <variation>H</variation>
    <location>
        <position position="90"/>
    </location>
</feature>
<feature type="mutagenesis site" description="Compromised interaction with TDR." evidence="8">
    <original>G</original>
    <variation>A</variation>
    <location>
        <position position="93"/>
    </location>
</feature>
<feature type="mutagenesis site" description="Impaired repression of tracheary element differentiation." evidence="6">
    <original>P</original>
    <variation>A</variation>
    <location>
        <position position="94"/>
    </location>
</feature>
<feature type="mutagenesis site" description="Compromised interaction with TDR." evidence="8">
    <original>N</original>
    <variation>L</variation>
    <location>
        <position position="95"/>
    </location>
</feature>
<feature type="mutagenesis site" description="Compromised interaction with TDR." evidence="8">
    <original>P</original>
    <variation>A</variation>
    <location>
        <position position="96"/>
    </location>
</feature>
<feature type="mutagenesis site" description="Compromised interaction with TDR." evidence="8">
    <original>S</original>
    <variation>H</variation>
    <location>
        <position position="98"/>
    </location>
</feature>
<feature type="mutagenesis site" description="Compromised interaction with TDR." evidence="8">
    <original>N</original>
    <variation>A</variation>
    <location>
        <position position="99"/>
    </location>
</feature>
<feature type="mutagenesis site" description="Compromised interaction with TDR." evidence="8">
    <original>N</original>
    <variation>NR</variation>
    <location>
        <position position="99"/>
    </location>
</feature>
<feature type="sequence conflict" description="In Ref. 5; AAM67331." evidence="13" ref="5">
    <original>RTLLLLF</original>
    <variation>HTRLLLL</variation>
    <location>
        <begin position="16"/>
        <end position="22"/>
    </location>
</feature>
<feature type="sequence conflict" description="In Ref. 5; AAM67331." evidence="13" ref="5">
    <original>R</original>
    <variation>P</variation>
    <location>
        <position position="74"/>
    </location>
</feature>
<keyword id="KW-0002">3D-structure</keyword>
<keyword id="KW-0217">Developmental protein</keyword>
<keyword id="KW-0221">Differentiation</keyword>
<keyword id="KW-0325">Glycoprotein</keyword>
<keyword id="KW-0379">Hydroxylation</keyword>
<keyword id="KW-1185">Reference proteome</keyword>
<keyword id="KW-0964">Secreted</keyword>
<keyword id="KW-0732">Signal</keyword>
<name>CLE41_ARATH</name>
<accession>Q84W98</accession>
<accession>Q8LB23</accession>